<gene>
    <name evidence="2" type="primary">mutM</name>
    <name evidence="2" type="synonym">fpg</name>
    <name type="ordered locus">Mpop_4528</name>
</gene>
<comment type="function">
    <text evidence="2">Involved in base excision repair of DNA damaged by oxidation or by mutagenic agents. Acts as a DNA glycosylase that recognizes and removes damaged bases. Has a preference for oxidized purines, such as 7,8-dihydro-8-oxoguanine (8-oxoG). Has AP (apurinic/apyrimidinic) lyase activity and introduces nicks in the DNA strand. Cleaves the DNA backbone by beta-delta elimination to generate a single-strand break at the site of the removed base with both 3'- and 5'-phosphates.</text>
</comment>
<comment type="catalytic activity">
    <reaction evidence="2">
        <text>Hydrolysis of DNA containing ring-opened 7-methylguanine residues, releasing 2,6-diamino-4-hydroxy-5-(N-methyl)formamidopyrimidine.</text>
        <dbReference type="EC" id="3.2.2.23"/>
    </reaction>
</comment>
<comment type="catalytic activity">
    <reaction evidence="2">
        <text>2'-deoxyribonucleotide-(2'-deoxyribose 5'-phosphate)-2'-deoxyribonucleotide-DNA = a 3'-end 2'-deoxyribonucleotide-(2,3-dehydro-2,3-deoxyribose 5'-phosphate)-DNA + a 5'-end 5'-phospho-2'-deoxyribonucleoside-DNA + H(+)</text>
        <dbReference type="Rhea" id="RHEA:66592"/>
        <dbReference type="Rhea" id="RHEA-COMP:13180"/>
        <dbReference type="Rhea" id="RHEA-COMP:16897"/>
        <dbReference type="Rhea" id="RHEA-COMP:17067"/>
        <dbReference type="ChEBI" id="CHEBI:15378"/>
        <dbReference type="ChEBI" id="CHEBI:136412"/>
        <dbReference type="ChEBI" id="CHEBI:157695"/>
        <dbReference type="ChEBI" id="CHEBI:167181"/>
        <dbReference type="EC" id="4.2.99.18"/>
    </reaction>
</comment>
<comment type="cofactor">
    <cofactor evidence="2">
        <name>Zn(2+)</name>
        <dbReference type="ChEBI" id="CHEBI:29105"/>
    </cofactor>
    <text evidence="2">Binds 1 zinc ion per subunit.</text>
</comment>
<comment type="subunit">
    <text evidence="2">Monomer.</text>
</comment>
<comment type="similarity">
    <text evidence="2">Belongs to the FPG family.</text>
</comment>
<dbReference type="EC" id="3.2.2.23" evidence="2"/>
<dbReference type="EC" id="4.2.99.18" evidence="2"/>
<dbReference type="EMBL" id="CP001029">
    <property type="protein sequence ID" value="ACB82626.1"/>
    <property type="molecule type" value="Genomic_DNA"/>
</dbReference>
<dbReference type="RefSeq" id="WP_012456228.1">
    <property type="nucleotide sequence ID" value="NC_010725.1"/>
</dbReference>
<dbReference type="SMR" id="B1ZGU8"/>
<dbReference type="STRING" id="441620.Mpop_4528"/>
<dbReference type="KEGG" id="mpo:Mpop_4528"/>
<dbReference type="eggNOG" id="COG0266">
    <property type="taxonomic scope" value="Bacteria"/>
</dbReference>
<dbReference type="HOGENOM" id="CLU_038423_1_1_5"/>
<dbReference type="OrthoDB" id="9800855at2"/>
<dbReference type="Proteomes" id="UP000007136">
    <property type="component" value="Chromosome"/>
</dbReference>
<dbReference type="GO" id="GO:0034039">
    <property type="term" value="F:8-oxo-7,8-dihydroguanine DNA N-glycosylase activity"/>
    <property type="evidence" value="ECO:0007669"/>
    <property type="project" value="TreeGrafter"/>
</dbReference>
<dbReference type="GO" id="GO:0140078">
    <property type="term" value="F:class I DNA-(apurinic or apyrimidinic site) endonuclease activity"/>
    <property type="evidence" value="ECO:0007669"/>
    <property type="project" value="UniProtKB-EC"/>
</dbReference>
<dbReference type="GO" id="GO:0003684">
    <property type="term" value="F:damaged DNA binding"/>
    <property type="evidence" value="ECO:0007669"/>
    <property type="project" value="InterPro"/>
</dbReference>
<dbReference type="GO" id="GO:0008270">
    <property type="term" value="F:zinc ion binding"/>
    <property type="evidence" value="ECO:0007669"/>
    <property type="project" value="UniProtKB-UniRule"/>
</dbReference>
<dbReference type="GO" id="GO:0006284">
    <property type="term" value="P:base-excision repair"/>
    <property type="evidence" value="ECO:0007669"/>
    <property type="project" value="InterPro"/>
</dbReference>
<dbReference type="CDD" id="cd08966">
    <property type="entry name" value="EcFpg-like_N"/>
    <property type="match status" value="1"/>
</dbReference>
<dbReference type="FunFam" id="1.10.8.50:FF:000003">
    <property type="entry name" value="Formamidopyrimidine-DNA glycosylase"/>
    <property type="match status" value="1"/>
</dbReference>
<dbReference type="Gene3D" id="1.10.8.50">
    <property type="match status" value="1"/>
</dbReference>
<dbReference type="Gene3D" id="3.20.190.10">
    <property type="entry name" value="MutM-like, N-terminal"/>
    <property type="match status" value="1"/>
</dbReference>
<dbReference type="HAMAP" id="MF_00103">
    <property type="entry name" value="Fapy_DNA_glycosyl"/>
    <property type="match status" value="1"/>
</dbReference>
<dbReference type="InterPro" id="IPR015886">
    <property type="entry name" value="DNA_glyclase/AP_lyase_DNA-bd"/>
</dbReference>
<dbReference type="InterPro" id="IPR020629">
    <property type="entry name" value="Formamido-pyr_DNA_Glyclase"/>
</dbReference>
<dbReference type="InterPro" id="IPR012319">
    <property type="entry name" value="FPG_cat"/>
</dbReference>
<dbReference type="InterPro" id="IPR035937">
    <property type="entry name" value="MutM-like_N-ter"/>
</dbReference>
<dbReference type="InterPro" id="IPR010979">
    <property type="entry name" value="Ribosomal_uS13-like_H2TH"/>
</dbReference>
<dbReference type="InterPro" id="IPR000214">
    <property type="entry name" value="Znf_DNA_glyclase/AP_lyase"/>
</dbReference>
<dbReference type="NCBIfam" id="TIGR00577">
    <property type="entry name" value="fpg"/>
    <property type="match status" value="1"/>
</dbReference>
<dbReference type="NCBIfam" id="NF002211">
    <property type="entry name" value="PRK01103.1"/>
    <property type="match status" value="1"/>
</dbReference>
<dbReference type="PANTHER" id="PTHR22993">
    <property type="entry name" value="FORMAMIDOPYRIMIDINE-DNA GLYCOSYLASE"/>
    <property type="match status" value="1"/>
</dbReference>
<dbReference type="PANTHER" id="PTHR22993:SF9">
    <property type="entry name" value="FORMAMIDOPYRIMIDINE-DNA GLYCOSYLASE"/>
    <property type="match status" value="1"/>
</dbReference>
<dbReference type="Pfam" id="PF01149">
    <property type="entry name" value="Fapy_DNA_glyco"/>
    <property type="match status" value="1"/>
</dbReference>
<dbReference type="Pfam" id="PF06831">
    <property type="entry name" value="H2TH"/>
    <property type="match status" value="1"/>
</dbReference>
<dbReference type="SMART" id="SM00898">
    <property type="entry name" value="Fapy_DNA_glyco"/>
    <property type="match status" value="1"/>
</dbReference>
<dbReference type="SMART" id="SM01232">
    <property type="entry name" value="H2TH"/>
    <property type="match status" value="1"/>
</dbReference>
<dbReference type="SUPFAM" id="SSF57716">
    <property type="entry name" value="Glucocorticoid receptor-like (DNA-binding domain)"/>
    <property type="match status" value="1"/>
</dbReference>
<dbReference type="SUPFAM" id="SSF81624">
    <property type="entry name" value="N-terminal domain of MutM-like DNA repair proteins"/>
    <property type="match status" value="1"/>
</dbReference>
<dbReference type="SUPFAM" id="SSF46946">
    <property type="entry name" value="S13-like H2TH domain"/>
    <property type="match status" value="1"/>
</dbReference>
<dbReference type="PROSITE" id="PS51068">
    <property type="entry name" value="FPG_CAT"/>
    <property type="match status" value="1"/>
</dbReference>
<dbReference type="PROSITE" id="PS51066">
    <property type="entry name" value="ZF_FPG_2"/>
    <property type="match status" value="1"/>
</dbReference>
<name>FPG_METPB</name>
<feature type="initiator methionine" description="Removed" evidence="1">
    <location>
        <position position="1"/>
    </location>
</feature>
<feature type="chain" id="PRO_1000094053" description="Formamidopyrimidine-DNA glycosylase">
    <location>
        <begin position="2"/>
        <end position="296"/>
    </location>
</feature>
<feature type="zinc finger region" description="FPG-type" evidence="2">
    <location>
        <begin position="259"/>
        <end position="295"/>
    </location>
</feature>
<feature type="active site" description="Schiff-base intermediate with DNA" evidence="2">
    <location>
        <position position="2"/>
    </location>
</feature>
<feature type="active site" description="Proton donor" evidence="2">
    <location>
        <position position="3"/>
    </location>
</feature>
<feature type="active site" description="Proton donor; for beta-elimination activity" evidence="2">
    <location>
        <position position="58"/>
    </location>
</feature>
<feature type="active site" description="Proton donor; for delta-elimination activity" evidence="2">
    <location>
        <position position="285"/>
    </location>
</feature>
<feature type="binding site" evidence="2">
    <location>
        <position position="106"/>
    </location>
    <ligand>
        <name>DNA</name>
        <dbReference type="ChEBI" id="CHEBI:16991"/>
    </ligand>
</feature>
<feature type="binding site" evidence="2">
    <location>
        <position position="125"/>
    </location>
    <ligand>
        <name>DNA</name>
        <dbReference type="ChEBI" id="CHEBI:16991"/>
    </ligand>
</feature>
<feature type="binding site" evidence="2">
    <location>
        <position position="168"/>
    </location>
    <ligand>
        <name>DNA</name>
        <dbReference type="ChEBI" id="CHEBI:16991"/>
    </ligand>
</feature>
<evidence type="ECO:0000250" key="1"/>
<evidence type="ECO:0000255" key="2">
    <source>
        <dbReference type="HAMAP-Rule" id="MF_00103"/>
    </source>
</evidence>
<accession>B1ZGU8</accession>
<keyword id="KW-0227">DNA damage</keyword>
<keyword id="KW-0234">DNA repair</keyword>
<keyword id="KW-0238">DNA-binding</keyword>
<keyword id="KW-0326">Glycosidase</keyword>
<keyword id="KW-0378">Hydrolase</keyword>
<keyword id="KW-0456">Lyase</keyword>
<keyword id="KW-0479">Metal-binding</keyword>
<keyword id="KW-0511">Multifunctional enzyme</keyword>
<keyword id="KW-0862">Zinc</keyword>
<keyword id="KW-0863">Zinc-finger</keyword>
<protein>
    <recommendedName>
        <fullName evidence="2">Formamidopyrimidine-DNA glycosylase</fullName>
        <shortName evidence="2">Fapy-DNA glycosylase</shortName>
        <ecNumber evidence="2">3.2.2.23</ecNumber>
    </recommendedName>
    <alternativeName>
        <fullName evidence="2">DNA-(apurinic or apyrimidinic site) lyase MutM</fullName>
        <shortName evidence="2">AP lyase MutM</shortName>
        <ecNumber evidence="2">4.2.99.18</ecNumber>
    </alternativeName>
</protein>
<organism>
    <name type="scientific">Methylorubrum populi (strain ATCC BAA-705 / NCIMB 13946 / BJ001)</name>
    <name type="common">Methylobacterium populi</name>
    <dbReference type="NCBI Taxonomy" id="441620"/>
    <lineage>
        <taxon>Bacteria</taxon>
        <taxon>Pseudomonadati</taxon>
        <taxon>Pseudomonadota</taxon>
        <taxon>Alphaproteobacteria</taxon>
        <taxon>Hyphomicrobiales</taxon>
        <taxon>Methylobacteriaceae</taxon>
        <taxon>Methylorubrum</taxon>
    </lineage>
</organism>
<proteinExistence type="inferred from homology"/>
<reference key="1">
    <citation type="submission" date="2008-04" db="EMBL/GenBank/DDBJ databases">
        <title>Complete sequence of chromosome of Methylobacterium populi BJ001.</title>
        <authorList>
            <consortium name="US DOE Joint Genome Institute"/>
            <person name="Copeland A."/>
            <person name="Lucas S."/>
            <person name="Lapidus A."/>
            <person name="Glavina del Rio T."/>
            <person name="Dalin E."/>
            <person name="Tice H."/>
            <person name="Bruce D."/>
            <person name="Goodwin L."/>
            <person name="Pitluck S."/>
            <person name="Chertkov O."/>
            <person name="Brettin T."/>
            <person name="Detter J.C."/>
            <person name="Han C."/>
            <person name="Kuske C.R."/>
            <person name="Schmutz J."/>
            <person name="Larimer F."/>
            <person name="Land M."/>
            <person name="Hauser L."/>
            <person name="Kyrpides N."/>
            <person name="Mikhailova N."/>
            <person name="Marx C."/>
            <person name="Richardson P."/>
        </authorList>
    </citation>
    <scope>NUCLEOTIDE SEQUENCE [LARGE SCALE GENOMIC DNA]</scope>
    <source>
        <strain>ATCC BAA-705 / NCIMB 13946 / BJ001</strain>
    </source>
</reference>
<sequence length="296" mass="32192">MPELPEVETVRRGLAPAMVGARFARVTLRRPNLRFPFPERFAERLEGTTVRELARRAKYLTAHLDSGESLILHLGMSGRFDVRMPDGSNLSPGDFYLEGALGTPKHDHVVMAFANGATVTYNDARRFGFMDLVATRDLETCRHFAAMGVEPLSDALDGAVLARLFARKITPLKAALLDQRLIAGLGNIYVCEALHRSGLHPALPAGALAKPDGAPTPKAKKLVKEIKAVLTEAVAAGGSTLRDYARPDGERGAFQHGFRVYDRVGHACPTKGCTGRIGRIVQGGRSTFFCETCQVR</sequence>